<comment type="function">
    <text evidence="1">This is one of the proteins that binds to the 5S RNA in the ribosome where it forms part of the central protuberance.</text>
</comment>
<comment type="subunit">
    <text evidence="1">Part of the 50S ribosomal subunit; part of the 5S rRNA/L5/L18/L25 subcomplex. Contacts the 5S rRNA. Binds to the 5S rRNA independently of L5 and L18.</text>
</comment>
<comment type="similarity">
    <text evidence="1">Belongs to the bacterial ribosomal protein bL25 family. CTC subfamily.</text>
</comment>
<feature type="chain" id="PRO_1000166184" description="Large ribosomal subunit protein bL25">
    <location>
        <begin position="1"/>
        <end position="223"/>
    </location>
</feature>
<feature type="region of interest" description="Disordered" evidence="2">
    <location>
        <begin position="198"/>
        <end position="223"/>
    </location>
</feature>
<accession>B9L0T5</accession>
<reference key="1">
    <citation type="journal article" date="2009" name="PLoS ONE">
        <title>Complete genome sequence of the aerobic CO-oxidizing thermophile Thermomicrobium roseum.</title>
        <authorList>
            <person name="Wu D."/>
            <person name="Raymond J."/>
            <person name="Wu M."/>
            <person name="Chatterji S."/>
            <person name="Ren Q."/>
            <person name="Graham J.E."/>
            <person name="Bryant D.A."/>
            <person name="Robb F."/>
            <person name="Colman A."/>
            <person name="Tallon L.J."/>
            <person name="Badger J.H."/>
            <person name="Madupu R."/>
            <person name="Ward N.L."/>
            <person name="Eisen J.A."/>
        </authorList>
    </citation>
    <scope>NUCLEOTIDE SEQUENCE [LARGE SCALE GENOMIC DNA]</scope>
    <source>
        <strain>ATCC 27502 / DSM 5159 / P-2</strain>
    </source>
</reference>
<proteinExistence type="inferred from homology"/>
<keyword id="KW-1185">Reference proteome</keyword>
<keyword id="KW-0687">Ribonucleoprotein</keyword>
<keyword id="KW-0689">Ribosomal protein</keyword>
<keyword id="KW-0694">RNA-binding</keyword>
<keyword id="KW-0699">rRNA-binding</keyword>
<organism>
    <name type="scientific">Thermomicrobium roseum (strain ATCC 27502 / DSM 5159 / P-2)</name>
    <dbReference type="NCBI Taxonomy" id="309801"/>
    <lineage>
        <taxon>Bacteria</taxon>
        <taxon>Pseudomonadati</taxon>
        <taxon>Thermomicrobiota</taxon>
        <taxon>Thermomicrobia</taxon>
        <taxon>Thermomicrobiales</taxon>
        <taxon>Thermomicrobiaceae</taxon>
        <taxon>Thermomicrobium</taxon>
    </lineage>
</organism>
<gene>
    <name evidence="1" type="primary">rplY</name>
    <name evidence="1" type="synonym">ctc</name>
    <name type="ordered locus">trd_1156</name>
</gene>
<name>RL25_THERP</name>
<sequence length="223" mass="24388">MTEHPVVNGERRTVFGKKVKRLRRLGRTPGVIAGPVVPEPIPVAVDEREFERAFHHVGTARLVDLVVDGTTYPVFIREVALHPVTREILNVEFYAPDLARPVTVTVPVLTVGELAPDVVGVVTIQTPELEIRALPDAVPEHIEVDLSLLSTERTVIHAGEIPLPVGVELETDPDVVVVVVEEAEEAEAAEEATRVLAEEIGDRPRSAEEGAAPVKERKLRESE</sequence>
<evidence type="ECO:0000255" key="1">
    <source>
        <dbReference type="HAMAP-Rule" id="MF_01334"/>
    </source>
</evidence>
<evidence type="ECO:0000256" key="2">
    <source>
        <dbReference type="SAM" id="MobiDB-lite"/>
    </source>
</evidence>
<evidence type="ECO:0000305" key="3"/>
<protein>
    <recommendedName>
        <fullName evidence="1">Large ribosomal subunit protein bL25</fullName>
    </recommendedName>
    <alternativeName>
        <fullName evidence="3">50S ribosomal protein L25</fullName>
    </alternativeName>
    <alternativeName>
        <fullName evidence="1">General stress protein CTC</fullName>
    </alternativeName>
</protein>
<dbReference type="EMBL" id="CP001275">
    <property type="protein sequence ID" value="ACM05481.1"/>
    <property type="molecule type" value="Genomic_DNA"/>
</dbReference>
<dbReference type="RefSeq" id="WP_015922109.1">
    <property type="nucleotide sequence ID" value="NC_011959.1"/>
</dbReference>
<dbReference type="SMR" id="B9L0T5"/>
<dbReference type="STRING" id="309801.trd_1156"/>
<dbReference type="KEGG" id="tro:trd_1156"/>
<dbReference type="eggNOG" id="COG1825">
    <property type="taxonomic scope" value="Bacteria"/>
</dbReference>
<dbReference type="HOGENOM" id="CLU_075939_2_1_0"/>
<dbReference type="OrthoDB" id="9790002at2"/>
<dbReference type="Proteomes" id="UP000000447">
    <property type="component" value="Chromosome"/>
</dbReference>
<dbReference type="GO" id="GO:0022625">
    <property type="term" value="C:cytosolic large ribosomal subunit"/>
    <property type="evidence" value="ECO:0007669"/>
    <property type="project" value="TreeGrafter"/>
</dbReference>
<dbReference type="GO" id="GO:0008097">
    <property type="term" value="F:5S rRNA binding"/>
    <property type="evidence" value="ECO:0007669"/>
    <property type="project" value="InterPro"/>
</dbReference>
<dbReference type="GO" id="GO:0003735">
    <property type="term" value="F:structural constituent of ribosome"/>
    <property type="evidence" value="ECO:0007669"/>
    <property type="project" value="InterPro"/>
</dbReference>
<dbReference type="GO" id="GO:0006412">
    <property type="term" value="P:translation"/>
    <property type="evidence" value="ECO:0007669"/>
    <property type="project" value="UniProtKB-UniRule"/>
</dbReference>
<dbReference type="CDD" id="cd00495">
    <property type="entry name" value="Ribosomal_L25_TL5_CTC"/>
    <property type="match status" value="1"/>
</dbReference>
<dbReference type="Gene3D" id="2.170.120.20">
    <property type="entry name" value="Ribosomal protein L25, beta domain"/>
    <property type="match status" value="1"/>
</dbReference>
<dbReference type="Gene3D" id="2.40.240.10">
    <property type="entry name" value="Ribosomal Protein L25, Chain P"/>
    <property type="match status" value="1"/>
</dbReference>
<dbReference type="HAMAP" id="MF_01334">
    <property type="entry name" value="Ribosomal_bL25_CTC"/>
    <property type="match status" value="1"/>
</dbReference>
<dbReference type="InterPro" id="IPR020056">
    <property type="entry name" value="Rbsml_bL25/Gln-tRNA_synth_N"/>
</dbReference>
<dbReference type="InterPro" id="IPR011035">
    <property type="entry name" value="Ribosomal_bL25/Gln-tRNA_synth"/>
</dbReference>
<dbReference type="InterPro" id="IPR020057">
    <property type="entry name" value="Ribosomal_bL25_b-dom"/>
</dbReference>
<dbReference type="InterPro" id="IPR037121">
    <property type="entry name" value="Ribosomal_bL25_C"/>
</dbReference>
<dbReference type="InterPro" id="IPR001021">
    <property type="entry name" value="Ribosomal_bL25_long"/>
</dbReference>
<dbReference type="InterPro" id="IPR029751">
    <property type="entry name" value="Ribosomal_L25_dom"/>
</dbReference>
<dbReference type="InterPro" id="IPR020930">
    <property type="entry name" value="Ribosomal_uL5_bac-type"/>
</dbReference>
<dbReference type="NCBIfam" id="TIGR00731">
    <property type="entry name" value="bL25_bact_ctc"/>
    <property type="match status" value="1"/>
</dbReference>
<dbReference type="PANTHER" id="PTHR33284">
    <property type="entry name" value="RIBOSOMAL PROTEIN L25/GLN-TRNA SYNTHETASE, ANTI-CODON-BINDING DOMAIN-CONTAINING PROTEIN"/>
    <property type="match status" value="1"/>
</dbReference>
<dbReference type="PANTHER" id="PTHR33284:SF1">
    <property type="entry name" value="RIBOSOMAL PROTEIN L25_GLN-TRNA SYNTHETASE, ANTI-CODON-BINDING DOMAIN-CONTAINING PROTEIN"/>
    <property type="match status" value="1"/>
</dbReference>
<dbReference type="Pfam" id="PF01386">
    <property type="entry name" value="Ribosomal_L25p"/>
    <property type="match status" value="1"/>
</dbReference>
<dbReference type="Pfam" id="PF14693">
    <property type="entry name" value="Ribosomal_TL5_C"/>
    <property type="match status" value="1"/>
</dbReference>
<dbReference type="SUPFAM" id="SSF50715">
    <property type="entry name" value="Ribosomal protein L25-like"/>
    <property type="match status" value="1"/>
</dbReference>